<organism>
    <name type="scientific">Mus musculus</name>
    <name type="common">Mouse</name>
    <dbReference type="NCBI Taxonomy" id="10090"/>
    <lineage>
        <taxon>Eukaryota</taxon>
        <taxon>Metazoa</taxon>
        <taxon>Chordata</taxon>
        <taxon>Craniata</taxon>
        <taxon>Vertebrata</taxon>
        <taxon>Euteleostomi</taxon>
        <taxon>Mammalia</taxon>
        <taxon>Eutheria</taxon>
        <taxon>Euarchontoglires</taxon>
        <taxon>Glires</taxon>
        <taxon>Rodentia</taxon>
        <taxon>Myomorpha</taxon>
        <taxon>Muroidea</taxon>
        <taxon>Muridae</taxon>
        <taxon>Murinae</taxon>
        <taxon>Mus</taxon>
        <taxon>Mus</taxon>
    </lineage>
</organism>
<comment type="function">
    <text evidence="1">Calcium-dependent lectin involved in innate immune defense. Binds mannose, fucose and N-acetylglucosamine on different microorganisms and activates the lectin complement pathway. Binds to late apoptotic cells, as well as to apoptotic blebs and to necrotic cells, but not to early apoptotic cells, facilitating their uptake by macrophages (By similarity).</text>
</comment>
<comment type="subunit">
    <text evidence="1">Oligomeric complex of 3 or more homotrimers. Interacts with MASP1 and MASP2 (By similarity). Interacts with MEP1A and MEP1B and may inhibit their catalytic activity (By similarity).</text>
</comment>
<comment type="subcellular location">
    <subcellularLocation>
        <location evidence="1">Secreted</location>
    </subcellularLocation>
</comment>
<comment type="domain">
    <text evidence="1">The coiled-coil domain mediates trimerization.</text>
</comment>
<comment type="PTM">
    <text evidence="1">Hydroxylation on proline residues within the sequence motif, GXPG, is most likely to be 4-hydroxy as this fits the requirement for 4-hydroxylation in vertebrates.</text>
</comment>
<comment type="online information" name="Functional Glycomics Gateway - Glycan Binding">
    <link uri="http://www.functionalglycomics.org/glycomics/GBPServlet?&amp;operationType=view&amp;cbpId=cbp_mou_Ctlect_169"/>
    <text>Mannose-binding protein C</text>
</comment>
<protein>
    <recommendedName>
        <fullName>Mannose-binding protein C</fullName>
        <shortName>MBP-C</shortName>
    </recommendedName>
    <alternativeName>
        <fullName>Mannan-binding protein</fullName>
    </alternativeName>
    <alternativeName>
        <fullName>RA-reactive factor P28A subunit</fullName>
        <shortName>RARF/P28A</shortName>
    </alternativeName>
</protein>
<name>MBL2_MOUSE</name>
<dbReference type="EMBL" id="S42294">
    <property type="protein sequence ID" value="AAB19343.1"/>
    <property type="molecule type" value="mRNA"/>
</dbReference>
<dbReference type="EMBL" id="U09016">
    <property type="protein sequence ID" value="AAA82010.1"/>
    <property type="molecule type" value="Genomic_DNA"/>
</dbReference>
<dbReference type="EMBL" id="U09013">
    <property type="protein sequence ID" value="AAA82010.1"/>
    <property type="status" value="JOINED"/>
    <property type="molecule type" value="Genomic_DNA"/>
</dbReference>
<dbReference type="EMBL" id="U09014">
    <property type="protein sequence ID" value="AAA82010.1"/>
    <property type="status" value="JOINED"/>
    <property type="molecule type" value="Genomic_DNA"/>
</dbReference>
<dbReference type="EMBL" id="U09015">
    <property type="protein sequence ID" value="AAA82010.1"/>
    <property type="status" value="JOINED"/>
    <property type="molecule type" value="Genomic_DNA"/>
</dbReference>
<dbReference type="EMBL" id="D11440">
    <property type="protein sequence ID" value="BAA02005.1"/>
    <property type="molecule type" value="mRNA"/>
</dbReference>
<dbReference type="EMBL" id="BC010760">
    <property type="protein sequence ID" value="AAH10760.1"/>
    <property type="molecule type" value="mRNA"/>
</dbReference>
<dbReference type="CCDS" id="CCDS29742.1"/>
<dbReference type="PIR" id="I48651">
    <property type="entry name" value="LNMSMC"/>
</dbReference>
<dbReference type="RefSeq" id="NP_001351987.1">
    <property type="nucleotide sequence ID" value="NM_001365058.1"/>
</dbReference>
<dbReference type="RefSeq" id="NP_034906.1">
    <property type="nucleotide sequence ID" value="NM_010776.2"/>
</dbReference>
<dbReference type="RefSeq" id="XP_006526793.1">
    <property type="nucleotide sequence ID" value="XM_006526730.1"/>
</dbReference>
<dbReference type="SMR" id="P41317"/>
<dbReference type="BioGRID" id="201335">
    <property type="interactions" value="2"/>
</dbReference>
<dbReference type="FunCoup" id="P41317">
    <property type="interactions" value="230"/>
</dbReference>
<dbReference type="STRING" id="10090.ENSMUSP00000025797"/>
<dbReference type="GlyCosmos" id="P41317">
    <property type="glycosylation" value="1 site, No reported glycans"/>
</dbReference>
<dbReference type="GlyGen" id="P41317">
    <property type="glycosylation" value="2 sites"/>
</dbReference>
<dbReference type="iPTMnet" id="P41317"/>
<dbReference type="PhosphoSitePlus" id="P41317"/>
<dbReference type="SwissPalm" id="P41317"/>
<dbReference type="CPTAC" id="non-CPTAC-3840"/>
<dbReference type="jPOST" id="P41317"/>
<dbReference type="PaxDb" id="10090-ENSMUSP00000025797"/>
<dbReference type="PeptideAtlas" id="P41317"/>
<dbReference type="ProteomicsDB" id="292274"/>
<dbReference type="Antibodypedia" id="693">
    <property type="antibodies" value="750 antibodies from 39 providers"/>
</dbReference>
<dbReference type="DNASU" id="17195"/>
<dbReference type="Ensembl" id="ENSMUST00000025797.7">
    <property type="protein sequence ID" value="ENSMUSP00000025797.6"/>
    <property type="gene ID" value="ENSMUSG00000024863.7"/>
</dbReference>
<dbReference type="GeneID" id="17195"/>
<dbReference type="KEGG" id="mmu:17195"/>
<dbReference type="UCSC" id="uc008hel.1">
    <property type="organism name" value="mouse"/>
</dbReference>
<dbReference type="AGR" id="MGI:96924"/>
<dbReference type="CTD" id="4153"/>
<dbReference type="MGI" id="MGI:96924">
    <property type="gene designation" value="Mbl2"/>
</dbReference>
<dbReference type="VEuPathDB" id="HostDB:ENSMUSG00000024863"/>
<dbReference type="eggNOG" id="KOG4297">
    <property type="taxonomic scope" value="Eukaryota"/>
</dbReference>
<dbReference type="GeneTree" id="ENSGT00940000154368"/>
<dbReference type="HOGENOM" id="CLU_049894_3_0_1"/>
<dbReference type="InParanoid" id="P41317"/>
<dbReference type="OMA" id="CAKFQAS"/>
<dbReference type="OrthoDB" id="10255512at2759"/>
<dbReference type="PhylomeDB" id="P41317"/>
<dbReference type="TreeFam" id="TF330481"/>
<dbReference type="Reactome" id="R-MMU-166662">
    <property type="pathway name" value="Lectin pathway of complement activation"/>
</dbReference>
<dbReference type="Reactome" id="R-MMU-166663">
    <property type="pathway name" value="Initial triggering of complement"/>
</dbReference>
<dbReference type="BioGRID-ORCS" id="17195">
    <property type="hits" value="3 hits in 76 CRISPR screens"/>
</dbReference>
<dbReference type="ChiTaRS" id="Mbl2">
    <property type="organism name" value="mouse"/>
</dbReference>
<dbReference type="PRO" id="PR:P41317"/>
<dbReference type="Proteomes" id="UP000000589">
    <property type="component" value="Chromosome 19"/>
</dbReference>
<dbReference type="RNAct" id="P41317">
    <property type="molecule type" value="protein"/>
</dbReference>
<dbReference type="Bgee" id="ENSMUSG00000024863">
    <property type="expression patterns" value="Expressed in left lobe of liver and 43 other cell types or tissues"/>
</dbReference>
<dbReference type="ExpressionAtlas" id="P41317">
    <property type="expression patterns" value="baseline and differential"/>
</dbReference>
<dbReference type="GO" id="GO:0005581">
    <property type="term" value="C:collagen trimer"/>
    <property type="evidence" value="ECO:0007669"/>
    <property type="project" value="UniProtKB-KW"/>
</dbReference>
<dbReference type="GO" id="GO:0005615">
    <property type="term" value="C:extracellular space"/>
    <property type="evidence" value="ECO:0000314"/>
    <property type="project" value="MGI"/>
</dbReference>
<dbReference type="GO" id="GO:1905370">
    <property type="term" value="C:serine-type endopeptidase complex"/>
    <property type="evidence" value="ECO:0007669"/>
    <property type="project" value="Ensembl"/>
</dbReference>
<dbReference type="GO" id="GO:0005509">
    <property type="term" value="F:calcium ion binding"/>
    <property type="evidence" value="ECO:0007669"/>
    <property type="project" value="Ensembl"/>
</dbReference>
<dbReference type="GO" id="GO:0048306">
    <property type="term" value="F:calcium-dependent protein binding"/>
    <property type="evidence" value="ECO:0007669"/>
    <property type="project" value="Ensembl"/>
</dbReference>
<dbReference type="GO" id="GO:0005537">
    <property type="term" value="F:D-mannose binding"/>
    <property type="evidence" value="ECO:0007669"/>
    <property type="project" value="UniProtKB-KW"/>
</dbReference>
<dbReference type="GO" id="GO:0005534">
    <property type="term" value="F:galactose binding"/>
    <property type="evidence" value="ECO:0007669"/>
    <property type="project" value="Ensembl"/>
</dbReference>
<dbReference type="GO" id="GO:0042802">
    <property type="term" value="F:identical protein binding"/>
    <property type="evidence" value="ECO:0007669"/>
    <property type="project" value="Ensembl"/>
</dbReference>
<dbReference type="GO" id="GO:0070273">
    <property type="term" value="F:phosphatidylinositol-4-phosphate binding"/>
    <property type="evidence" value="ECO:0007669"/>
    <property type="project" value="Ensembl"/>
</dbReference>
<dbReference type="GO" id="GO:0002020">
    <property type="term" value="F:protease binding"/>
    <property type="evidence" value="ECO:0007669"/>
    <property type="project" value="Ensembl"/>
</dbReference>
<dbReference type="GO" id="GO:0005102">
    <property type="term" value="F:signaling receptor binding"/>
    <property type="evidence" value="ECO:0007669"/>
    <property type="project" value="Ensembl"/>
</dbReference>
<dbReference type="GO" id="GO:0140374">
    <property type="term" value="P:antiviral innate immune response"/>
    <property type="evidence" value="ECO:0007669"/>
    <property type="project" value="Ensembl"/>
</dbReference>
<dbReference type="GO" id="GO:0002752">
    <property type="term" value="P:cell surface pattern recognition receptor signaling pathway"/>
    <property type="evidence" value="ECO:0007669"/>
    <property type="project" value="Ensembl"/>
</dbReference>
<dbReference type="GO" id="GO:0006958">
    <property type="term" value="P:complement activation, classical pathway"/>
    <property type="evidence" value="ECO:0007669"/>
    <property type="project" value="UniProtKB-KW"/>
</dbReference>
<dbReference type="GO" id="GO:0001867">
    <property type="term" value="P:complement activation, lectin pathway"/>
    <property type="evidence" value="ECO:0000314"/>
    <property type="project" value="MGI"/>
</dbReference>
<dbReference type="GO" id="GO:0050830">
    <property type="term" value="P:defense response to Gram-positive bacterium"/>
    <property type="evidence" value="ECO:0000316"/>
    <property type="project" value="MGI"/>
</dbReference>
<dbReference type="GO" id="GO:0051873">
    <property type="term" value="P:killing by host of symbiont cells"/>
    <property type="evidence" value="ECO:0000316"/>
    <property type="project" value="MGI"/>
</dbReference>
<dbReference type="GO" id="GO:0048525">
    <property type="term" value="P:negative regulation of viral process"/>
    <property type="evidence" value="ECO:0007669"/>
    <property type="project" value="Ensembl"/>
</dbReference>
<dbReference type="GO" id="GO:0045917">
    <property type="term" value="P:positive regulation of complement activation"/>
    <property type="evidence" value="ECO:0007669"/>
    <property type="project" value="Ensembl"/>
</dbReference>
<dbReference type="GO" id="GO:1903028">
    <property type="term" value="P:positive regulation of opsonization"/>
    <property type="evidence" value="ECO:0007669"/>
    <property type="project" value="Ensembl"/>
</dbReference>
<dbReference type="GO" id="GO:0050766">
    <property type="term" value="P:positive regulation of phagocytosis"/>
    <property type="evidence" value="ECO:0000316"/>
    <property type="project" value="MGI"/>
</dbReference>
<dbReference type="GO" id="GO:0010954">
    <property type="term" value="P:positive regulation of protein processing"/>
    <property type="evidence" value="ECO:0007669"/>
    <property type="project" value="Ensembl"/>
</dbReference>
<dbReference type="GO" id="GO:0006508">
    <property type="term" value="P:proteolysis"/>
    <property type="evidence" value="ECO:0007669"/>
    <property type="project" value="Ensembl"/>
</dbReference>
<dbReference type="FunFam" id="3.10.100.10:FF:000088">
    <property type="entry name" value="Mannose-binding protein A"/>
    <property type="match status" value="1"/>
</dbReference>
<dbReference type="Gene3D" id="3.10.100.10">
    <property type="entry name" value="Mannose-Binding Protein A, subunit A"/>
    <property type="match status" value="1"/>
</dbReference>
<dbReference type="InterPro" id="IPR001304">
    <property type="entry name" value="C-type_lectin-like"/>
</dbReference>
<dbReference type="InterPro" id="IPR016186">
    <property type="entry name" value="C-type_lectin-like/link_sf"/>
</dbReference>
<dbReference type="InterPro" id="IPR018378">
    <property type="entry name" value="C-type_lectin_CS"/>
</dbReference>
<dbReference type="InterPro" id="IPR051077">
    <property type="entry name" value="Ca-dependent_lectin"/>
</dbReference>
<dbReference type="InterPro" id="IPR008160">
    <property type="entry name" value="Collagen"/>
</dbReference>
<dbReference type="InterPro" id="IPR016187">
    <property type="entry name" value="CTDL_fold"/>
</dbReference>
<dbReference type="PANTHER" id="PTHR24024:SF34">
    <property type="entry name" value="MANNOSE-BINDING PROTEIN C"/>
    <property type="match status" value="1"/>
</dbReference>
<dbReference type="PANTHER" id="PTHR24024">
    <property type="entry name" value="PULMONARY SURFACTANT-ASSOCIATED PROTEIN A"/>
    <property type="match status" value="1"/>
</dbReference>
<dbReference type="Pfam" id="PF01391">
    <property type="entry name" value="Collagen"/>
    <property type="match status" value="1"/>
</dbReference>
<dbReference type="Pfam" id="PF00059">
    <property type="entry name" value="Lectin_C"/>
    <property type="match status" value="1"/>
</dbReference>
<dbReference type="SMART" id="SM00034">
    <property type="entry name" value="CLECT"/>
    <property type="match status" value="1"/>
</dbReference>
<dbReference type="SUPFAM" id="SSF56436">
    <property type="entry name" value="C-type lectin-like"/>
    <property type="match status" value="1"/>
</dbReference>
<dbReference type="PROSITE" id="PS00615">
    <property type="entry name" value="C_TYPE_LECTIN_1"/>
    <property type="match status" value="1"/>
</dbReference>
<dbReference type="PROSITE" id="PS50041">
    <property type="entry name" value="C_TYPE_LECTIN_2"/>
    <property type="match status" value="1"/>
</dbReference>
<sequence>MSIFTSFLLLCVVTVVYAETLTEGVQNSCPVVTCSSPGLNGFPGKDGRDGAKGEKGEPGQGLRGLQGPPGKVGPTGPPGNPGLKGAVGPKGDRGDRAEFDTSEIDSEIAALRSELRALRNWVLFSLSEKVGKKYFVSSVKKMSLDRVKALCSEFQGSVATPRNAEENSAIQKVAKDIAYLGITDVRVEGSFEDLTGNRVRYTNWNDGEPNNTGDGEDCVVILGNGKWNDVPCSDSFLAICEFSD</sequence>
<feature type="signal peptide" evidence="1">
    <location>
        <begin position="1"/>
        <end position="18"/>
    </location>
</feature>
<feature type="chain" id="PRO_0000017405" description="Mannose-binding protein C">
    <location>
        <begin position="19"/>
        <end position="244"/>
    </location>
</feature>
<feature type="domain" description="Collagen-like">
    <location>
        <begin position="38"/>
        <end position="96"/>
    </location>
</feature>
<feature type="domain" description="C-type lectin" evidence="3">
    <location>
        <begin position="129"/>
        <end position="241"/>
    </location>
</feature>
<feature type="region of interest" description="Disordered" evidence="4">
    <location>
        <begin position="40"/>
        <end position="101"/>
    </location>
</feature>
<feature type="coiled-coil region" evidence="1">
    <location>
        <begin position="108"/>
        <end position="126"/>
    </location>
</feature>
<feature type="compositionally biased region" description="Basic and acidic residues" evidence="4">
    <location>
        <begin position="45"/>
        <end position="57"/>
    </location>
</feature>
<feature type="compositionally biased region" description="Low complexity" evidence="4">
    <location>
        <begin position="65"/>
        <end position="74"/>
    </location>
</feature>
<feature type="compositionally biased region" description="Basic and acidic residues" evidence="4">
    <location>
        <begin position="90"/>
        <end position="99"/>
    </location>
</feature>
<feature type="modified residue" description="4-hydroxyproline" evidence="2">
    <location>
        <position position="43"/>
    </location>
</feature>
<feature type="modified residue" description="4-hydroxyproline" evidence="2">
    <location>
        <position position="58"/>
    </location>
</feature>
<feature type="modified residue" description="4-hydroxyproline" evidence="2">
    <location>
        <position position="69"/>
    </location>
</feature>
<feature type="modified residue" description="4-hydroxyproline" evidence="2">
    <location>
        <position position="78"/>
    </location>
</feature>
<feature type="modified residue" description="4-hydroxyproline" evidence="2">
    <location>
        <position position="81"/>
    </location>
</feature>
<feature type="glycosylation site" description="N-linked (GlcNAc...) asparagine" evidence="2">
    <location>
        <position position="210"/>
    </location>
</feature>
<feature type="disulfide bond" description="Interchain" evidence="3">
    <location>
        <position position="29"/>
    </location>
</feature>
<feature type="disulfide bond" description="Interchain" evidence="3">
    <location>
        <position position="34"/>
    </location>
</feature>
<feature type="disulfide bond" evidence="3">
    <location>
        <begin position="151"/>
        <end position="240"/>
    </location>
</feature>
<feature type="disulfide bond" evidence="3">
    <location>
        <begin position="218"/>
        <end position="232"/>
    </location>
</feature>
<feature type="sequence conflict" description="In Ref. 1; AAB19343." evidence="5" ref="1">
    <original>I</original>
    <variation>L</variation>
    <location>
        <position position="3"/>
    </location>
</feature>
<feature type="sequence conflict" description="In Ref. 1; AAB19343." evidence="5" ref="1">
    <original>V</original>
    <variation>A</variation>
    <location>
        <position position="15"/>
    </location>
</feature>
<keyword id="KW-0106">Calcium</keyword>
<keyword id="KW-0175">Coiled coil</keyword>
<keyword id="KW-0176">Collagen</keyword>
<keyword id="KW-1018">Complement activation lectin pathway</keyword>
<keyword id="KW-0180">Complement pathway</keyword>
<keyword id="KW-1015">Disulfide bond</keyword>
<keyword id="KW-0325">Glycoprotein</keyword>
<keyword id="KW-0379">Hydroxylation</keyword>
<keyword id="KW-0391">Immunity</keyword>
<keyword id="KW-0399">Innate immunity</keyword>
<keyword id="KW-0430">Lectin</keyword>
<keyword id="KW-0465">Mannose-binding</keyword>
<keyword id="KW-1185">Reference proteome</keyword>
<keyword id="KW-0677">Repeat</keyword>
<keyword id="KW-0964">Secreted</keyword>
<keyword id="KW-0732">Signal</keyword>
<gene>
    <name type="primary">Mbl2</name>
</gene>
<proteinExistence type="evidence at protein level"/>
<accession>P41317</accession>
<reference key="1">
    <citation type="journal article" date="1991" name="J. Immunol.">
        <title>Molecular characterization of the mouse mannose-binding proteins. The mannose-binding protein A but not C is an acute phase reactant.</title>
        <authorList>
            <person name="Sastry K."/>
            <person name="Zahedi K."/>
            <person name="Lelias J.M."/>
            <person name="Whitehead A.S."/>
            <person name="Ezekowitz R.A."/>
        </authorList>
    </citation>
    <scope>NUCLEOTIDE SEQUENCE</scope>
    <source>
        <strain>CBA/J</strain>
        <tissue>Liver</tissue>
    </source>
</reference>
<reference key="2">
    <citation type="journal article" date="1995" name="Mamm. Genome">
        <title>Characterization of murine mannose-binding protein genes Mbl1 and Mbl2 reveals features common to other collectin genes.</title>
        <authorList>
            <person name="Sastry R."/>
            <person name="Wang J.S."/>
            <person name="Brown D.C."/>
            <person name="Ezekowitz R.A."/>
            <person name="Tauber A.I."/>
            <person name="Sastry K.N."/>
        </authorList>
    </citation>
    <scope>NUCLEOTIDE SEQUENCE</scope>
    <source>
        <strain>BALB/cJ</strain>
    </source>
</reference>
<reference key="3">
    <citation type="submission" date="1992-07" db="EMBL/GenBank/DDBJ databases">
        <authorList>
            <person name="Kuge S."/>
            <person name="Ihara S."/>
            <person name="Watanabe E."/>
            <person name="Watanabe M."/>
            <person name="Takishima K."/>
            <person name="Suga T."/>
            <person name="Mamaiya G."/>
            <person name="Kawakami M."/>
        </authorList>
    </citation>
    <scope>NUCLEOTIDE SEQUENCE</scope>
</reference>
<reference key="4">
    <citation type="journal article" date="2004" name="Genome Res.">
        <title>The status, quality, and expansion of the NIH full-length cDNA project: the Mammalian Gene Collection (MGC).</title>
        <authorList>
            <consortium name="The MGC Project Team"/>
        </authorList>
    </citation>
    <scope>NUCLEOTIDE SEQUENCE [LARGE SCALE MRNA]</scope>
    <source>
        <strain>FVB/N</strain>
        <tissue>Liver</tissue>
    </source>
</reference>
<reference key="5">
    <citation type="journal article" date="2010" name="Cell">
        <title>A tissue-specific atlas of mouse protein phosphorylation and expression.</title>
        <authorList>
            <person name="Huttlin E.L."/>
            <person name="Jedrychowski M.P."/>
            <person name="Elias J.E."/>
            <person name="Goswami T."/>
            <person name="Rad R."/>
            <person name="Beausoleil S.A."/>
            <person name="Villen J."/>
            <person name="Haas W."/>
            <person name="Sowa M.E."/>
            <person name="Gygi S.P."/>
        </authorList>
    </citation>
    <scope>IDENTIFICATION BY MASS SPECTROMETRY [LARGE SCALE ANALYSIS]</scope>
    <source>
        <tissue>Brown adipose tissue</tissue>
        <tissue>Heart</tissue>
        <tissue>Liver</tissue>
        <tissue>Lung</tissue>
        <tissue>Testis</tissue>
    </source>
</reference>
<evidence type="ECO:0000250" key="1"/>
<evidence type="ECO:0000255" key="2"/>
<evidence type="ECO:0000255" key="3">
    <source>
        <dbReference type="PROSITE-ProRule" id="PRU00040"/>
    </source>
</evidence>
<evidence type="ECO:0000256" key="4">
    <source>
        <dbReference type="SAM" id="MobiDB-lite"/>
    </source>
</evidence>
<evidence type="ECO:0000305" key="5"/>